<feature type="signal peptide" evidence="2">
    <location>
        <begin position="1"/>
        <end position="22"/>
    </location>
</feature>
<feature type="chain" id="PRO_0000348551" description="Glycosyl hydrolase family 109 protein 1">
    <location>
        <begin position="23"/>
        <end position="467"/>
    </location>
</feature>
<feature type="binding site" evidence="1">
    <location>
        <begin position="66"/>
        <end position="67"/>
    </location>
    <ligand>
        <name>NAD(+)</name>
        <dbReference type="ChEBI" id="CHEBI:57540"/>
    </ligand>
</feature>
<feature type="binding site" evidence="1">
    <location>
        <position position="88"/>
    </location>
    <ligand>
        <name>NAD(+)</name>
        <dbReference type="ChEBI" id="CHEBI:57540"/>
    </ligand>
</feature>
<feature type="binding site" evidence="1">
    <location>
        <begin position="137"/>
        <end position="140"/>
    </location>
    <ligand>
        <name>NAD(+)</name>
        <dbReference type="ChEBI" id="CHEBI:57540"/>
    </ligand>
</feature>
<feature type="binding site" evidence="1">
    <location>
        <begin position="157"/>
        <end position="158"/>
    </location>
    <ligand>
        <name>NAD(+)</name>
        <dbReference type="ChEBI" id="CHEBI:57540"/>
    </ligand>
</feature>
<feature type="binding site" evidence="1">
    <location>
        <position position="186"/>
    </location>
    <ligand>
        <name>NAD(+)</name>
        <dbReference type="ChEBI" id="CHEBI:57540"/>
    </ligand>
</feature>
<feature type="binding site" evidence="1">
    <location>
        <position position="215"/>
    </location>
    <ligand>
        <name>substrate</name>
    </ligand>
</feature>
<feature type="binding site" evidence="1">
    <location>
        <position position="231"/>
    </location>
    <ligand>
        <name>substrate</name>
    </ligand>
</feature>
<feature type="binding site" evidence="1">
    <location>
        <begin position="243"/>
        <end position="246"/>
    </location>
    <ligand>
        <name>substrate</name>
    </ligand>
</feature>
<feature type="binding site" evidence="1">
    <location>
        <position position="243"/>
    </location>
    <ligand>
        <name>NAD(+)</name>
        <dbReference type="ChEBI" id="CHEBI:57540"/>
    </ligand>
</feature>
<feature type="binding site" evidence="1">
    <location>
        <position position="321"/>
    </location>
    <ligand>
        <name>substrate</name>
    </ligand>
</feature>
<keyword id="KW-0326">Glycosidase</keyword>
<keyword id="KW-0378">Hydrolase</keyword>
<keyword id="KW-0520">NAD</keyword>
<keyword id="KW-1185">Reference proteome</keyword>
<keyword id="KW-0732">Signal</keyword>
<organism>
    <name type="scientific">Bacteroides thetaiotaomicron (strain ATCC 29148 / DSM 2079 / JCM 5827 / CCUG 10774 / NCTC 10582 / VPI-5482 / E50)</name>
    <dbReference type="NCBI Taxonomy" id="226186"/>
    <lineage>
        <taxon>Bacteria</taxon>
        <taxon>Pseudomonadati</taxon>
        <taxon>Bacteroidota</taxon>
        <taxon>Bacteroidia</taxon>
        <taxon>Bacteroidales</taxon>
        <taxon>Bacteroidaceae</taxon>
        <taxon>Bacteroides</taxon>
    </lineage>
</organism>
<name>G1091_BACTN</name>
<protein>
    <recommendedName>
        <fullName>Glycosyl hydrolase family 109 protein 1</fullName>
        <ecNumber>3.2.1.-</ecNumber>
    </recommendedName>
</protein>
<proteinExistence type="inferred from homology"/>
<dbReference type="EC" id="3.2.1.-"/>
<dbReference type="EMBL" id="AE015928">
    <property type="protein sequence ID" value="AAO79348.1"/>
    <property type="molecule type" value="Genomic_DNA"/>
</dbReference>
<dbReference type="RefSeq" id="NP_813154.1">
    <property type="nucleotide sequence ID" value="NC_004663.1"/>
</dbReference>
<dbReference type="RefSeq" id="WP_008759920.1">
    <property type="nucleotide sequence ID" value="NZ_UYXG01000012.1"/>
</dbReference>
<dbReference type="SMR" id="Q89ZX8"/>
<dbReference type="STRING" id="226186.BT_4243"/>
<dbReference type="CAZy" id="GH109">
    <property type="family name" value="Glycoside Hydrolase Family 109"/>
</dbReference>
<dbReference type="PaxDb" id="226186-BT_4243"/>
<dbReference type="EnsemblBacteria" id="AAO79348">
    <property type="protein sequence ID" value="AAO79348"/>
    <property type="gene ID" value="BT_4243"/>
</dbReference>
<dbReference type="KEGG" id="bth:BT_4243"/>
<dbReference type="PATRIC" id="fig|226186.12.peg.4314"/>
<dbReference type="eggNOG" id="COG0673">
    <property type="taxonomic scope" value="Bacteria"/>
</dbReference>
<dbReference type="HOGENOM" id="CLU_046965_0_0_10"/>
<dbReference type="InParanoid" id="Q89ZX8"/>
<dbReference type="OrthoDB" id="9771072at2"/>
<dbReference type="Proteomes" id="UP000001414">
    <property type="component" value="Chromosome"/>
</dbReference>
<dbReference type="GO" id="GO:0016798">
    <property type="term" value="F:hydrolase activity, acting on glycosyl bonds"/>
    <property type="evidence" value="ECO:0007669"/>
    <property type="project" value="UniProtKB-KW"/>
</dbReference>
<dbReference type="GO" id="GO:0000166">
    <property type="term" value="F:nucleotide binding"/>
    <property type="evidence" value="ECO:0007669"/>
    <property type="project" value="InterPro"/>
</dbReference>
<dbReference type="Gene3D" id="3.30.360.10">
    <property type="entry name" value="Dihydrodipicolinate Reductase, domain 2"/>
    <property type="match status" value="1"/>
</dbReference>
<dbReference type="Gene3D" id="3.40.50.720">
    <property type="entry name" value="NAD(P)-binding Rossmann-like Domain"/>
    <property type="match status" value="1"/>
</dbReference>
<dbReference type="InterPro" id="IPR000683">
    <property type="entry name" value="Gfo/Idh/MocA-like_OxRdtase_N"/>
</dbReference>
<dbReference type="InterPro" id="IPR050463">
    <property type="entry name" value="Gfo/Idh/MocA_oxidrdct_glycsds"/>
</dbReference>
<dbReference type="InterPro" id="IPR049303">
    <property type="entry name" value="Glyco_hydro_109_C"/>
</dbReference>
<dbReference type="InterPro" id="IPR036291">
    <property type="entry name" value="NAD(P)-bd_dom_sf"/>
</dbReference>
<dbReference type="PANTHER" id="PTHR43818">
    <property type="entry name" value="BCDNA.GH03377"/>
    <property type="match status" value="1"/>
</dbReference>
<dbReference type="PANTHER" id="PTHR43818:SF1">
    <property type="entry name" value="GLYCOSYL HYDROLASE FAMILY 109 PROTEIN"/>
    <property type="match status" value="1"/>
</dbReference>
<dbReference type="Pfam" id="PF01408">
    <property type="entry name" value="GFO_IDH_MocA"/>
    <property type="match status" value="1"/>
</dbReference>
<dbReference type="Pfam" id="PF21252">
    <property type="entry name" value="Glyco_hydro_109_C"/>
    <property type="match status" value="1"/>
</dbReference>
<dbReference type="SUPFAM" id="SSF55347">
    <property type="entry name" value="Glyceraldehyde-3-phosphate dehydrogenase-like, C-terminal domain"/>
    <property type="match status" value="1"/>
</dbReference>
<dbReference type="SUPFAM" id="SSF51735">
    <property type="entry name" value="NAD(P)-binding Rossmann-fold domains"/>
    <property type="match status" value="1"/>
</dbReference>
<comment type="function">
    <text evidence="1">Glycosidase.</text>
</comment>
<comment type="cofactor">
    <cofactor evidence="1">
        <name>NAD(+)</name>
        <dbReference type="ChEBI" id="CHEBI:57540"/>
    </cofactor>
    <text evidence="1">Binds 1 NAD(+) per subunit. The NAD(+) cannot dissociate.</text>
</comment>
<comment type="similarity">
    <text evidence="3">Belongs to the Gfo/Idh/MocA family. Glycosyl hydrolase 109 subfamily.</text>
</comment>
<reference key="1">
    <citation type="journal article" date="2003" name="Science">
        <title>A genomic view of the human-Bacteroides thetaiotaomicron symbiosis.</title>
        <authorList>
            <person name="Xu J."/>
            <person name="Bjursell M.K."/>
            <person name="Himrod J."/>
            <person name="Deng S."/>
            <person name="Carmichael L.K."/>
            <person name="Chiang H.C."/>
            <person name="Hooper L.V."/>
            <person name="Gordon J.I."/>
        </authorList>
    </citation>
    <scope>NUCLEOTIDE SEQUENCE [LARGE SCALE GENOMIC DNA]</scope>
    <source>
        <strain>ATCC 29148 / DSM 2079 / JCM 5827 / CCUG 10774 / NCTC 10582 / VPI-5482 / E50</strain>
    </source>
</reference>
<evidence type="ECO:0000250" key="1"/>
<evidence type="ECO:0000255" key="2"/>
<evidence type="ECO:0000305" key="3"/>
<accession>Q89ZX8</accession>
<gene>
    <name type="ordered locus">BT_4243</name>
</gene>
<sequence length="467" mass="52832">MKKLLLNTLIGLALLTCQTSFAQKTKAKFSPIKVETPARPANQQDVIQLVTPKLETVRVGFIGLGMRGPGAVERWTHIPGTQIVALCDLLPERVENAQKILEKAGLPKAASYAGDEKAWKKLCERDDIDVVYIATDWKHHADMGVYAMEHGKHVAIEVPAAMTLDEIWKLINTSEKTRKHCMQLENCVYDFFELTSLNMAQQGVFGEVLHVEGAYIHNLEDFWPYYWNNWRMDYNQKHRGDVYATHGMGPACQVLNIHRGDRMKTLVAMDTKAVNGPAYIKKSTGKEVKDFQNGDQTTTLIRTENGKTMLIQHNVMTPRPYSRMYQVVGADGYASKYPIEEYCLRPTQVDSNDVPNHEKLNAHGSVSEDVKKALMAKYKDPIHKELEETAKKVGGHGGMDYIMDYRLVYCLRNGLPLDMDVYDLAEWCCMAELTRLSIENGSAPVEVPDFTRGGWNKVQGYRHAFAE</sequence>